<comment type="function">
    <text evidence="2">Regulates the transcription of the pyrimidine nucleotide (pyr) operon in response to exogenous pyrimidines.</text>
</comment>
<comment type="function">
    <text evidence="2">Also displays a weak uracil phosphoribosyltransferase activity which is not physiologically significant.</text>
</comment>
<comment type="catalytic activity">
    <reaction evidence="2">
        <text>UMP + diphosphate = 5-phospho-alpha-D-ribose 1-diphosphate + uracil</text>
        <dbReference type="Rhea" id="RHEA:13017"/>
        <dbReference type="ChEBI" id="CHEBI:17568"/>
        <dbReference type="ChEBI" id="CHEBI:33019"/>
        <dbReference type="ChEBI" id="CHEBI:57865"/>
        <dbReference type="ChEBI" id="CHEBI:58017"/>
        <dbReference type="EC" id="2.4.2.9"/>
    </reaction>
</comment>
<comment type="similarity">
    <text evidence="2">Belongs to the purine/pyrimidine phosphoribosyltransferase family. PyrR subfamily.</text>
</comment>
<gene>
    <name evidence="2" type="primary">pyrR</name>
    <name type="ordered locus">PM1207</name>
</gene>
<proteinExistence type="inferred from homology"/>
<reference key="1">
    <citation type="journal article" date="2001" name="Proc. Natl. Acad. Sci. U.S.A.">
        <title>Complete genomic sequence of Pasteurella multocida Pm70.</title>
        <authorList>
            <person name="May B.J."/>
            <person name="Zhang Q."/>
            <person name="Li L.L."/>
            <person name="Paustian M.L."/>
            <person name="Whittam T.S."/>
            <person name="Kapur V."/>
        </authorList>
    </citation>
    <scope>NUCLEOTIDE SEQUENCE [LARGE SCALE GENOMIC DNA]</scope>
    <source>
        <strain>Pm70</strain>
    </source>
</reference>
<sequence>MEKIIIDENQFLRTISRISHEIIEKHQRLDNIVIVGIKRRGAEIAELIKKKIADLANVELPSIDLDITFYRDDLEYAEPDSKSPTYSGASSFISIHNKEVILVDDVLYTGRTIRAALDALVDFGRAAKIELVIFVDRGHRELPIRADYVGKNVPTSRSEEVQVRTLKFDNCYEVALLSPTK</sequence>
<keyword id="KW-0328">Glycosyltransferase</keyword>
<keyword id="KW-1185">Reference proteome</keyword>
<keyword id="KW-0804">Transcription</keyword>
<keyword id="KW-0805">Transcription regulation</keyword>
<keyword id="KW-0808">Transferase</keyword>
<organism>
    <name type="scientific">Pasteurella multocida (strain Pm70)</name>
    <dbReference type="NCBI Taxonomy" id="272843"/>
    <lineage>
        <taxon>Bacteria</taxon>
        <taxon>Pseudomonadati</taxon>
        <taxon>Pseudomonadota</taxon>
        <taxon>Gammaproteobacteria</taxon>
        <taxon>Pasteurellales</taxon>
        <taxon>Pasteurellaceae</taxon>
        <taxon>Pasteurella</taxon>
    </lineage>
</organism>
<accession>Q9CLL7</accession>
<dbReference type="EC" id="2.4.2.9" evidence="2"/>
<dbReference type="EMBL" id="AE004439">
    <property type="protein sequence ID" value="AAK03291.1"/>
    <property type="molecule type" value="Genomic_DNA"/>
</dbReference>
<dbReference type="RefSeq" id="WP_005717592.1">
    <property type="nucleotide sequence ID" value="NC_002663.1"/>
</dbReference>
<dbReference type="SMR" id="Q9CLL7"/>
<dbReference type="STRING" id="272843.PM1207"/>
<dbReference type="EnsemblBacteria" id="AAK03291">
    <property type="protein sequence ID" value="AAK03291"/>
    <property type="gene ID" value="PM1207"/>
</dbReference>
<dbReference type="GeneID" id="77206524"/>
<dbReference type="KEGG" id="pmu:PM1207"/>
<dbReference type="HOGENOM" id="CLU_094234_2_1_6"/>
<dbReference type="OrthoDB" id="9802227at2"/>
<dbReference type="Proteomes" id="UP000000809">
    <property type="component" value="Chromosome"/>
</dbReference>
<dbReference type="GO" id="GO:0004845">
    <property type="term" value="F:uracil phosphoribosyltransferase activity"/>
    <property type="evidence" value="ECO:0007669"/>
    <property type="project" value="UniProtKB-UniRule"/>
</dbReference>
<dbReference type="GO" id="GO:0006355">
    <property type="term" value="P:regulation of DNA-templated transcription"/>
    <property type="evidence" value="ECO:0007669"/>
    <property type="project" value="UniProtKB-UniRule"/>
</dbReference>
<dbReference type="CDD" id="cd06223">
    <property type="entry name" value="PRTases_typeI"/>
    <property type="match status" value="1"/>
</dbReference>
<dbReference type="FunFam" id="3.40.50.2020:FF:000020">
    <property type="entry name" value="Bifunctional protein PyrR"/>
    <property type="match status" value="1"/>
</dbReference>
<dbReference type="Gene3D" id="3.40.50.2020">
    <property type="match status" value="1"/>
</dbReference>
<dbReference type="HAMAP" id="MF_01219">
    <property type="entry name" value="PyrR"/>
    <property type="match status" value="1"/>
</dbReference>
<dbReference type="InterPro" id="IPR000836">
    <property type="entry name" value="PRibTrfase_dom"/>
</dbReference>
<dbReference type="InterPro" id="IPR029057">
    <property type="entry name" value="PRTase-like"/>
</dbReference>
<dbReference type="InterPro" id="IPR023050">
    <property type="entry name" value="PyrR"/>
</dbReference>
<dbReference type="InterPro" id="IPR050137">
    <property type="entry name" value="PyrR_bifunctional"/>
</dbReference>
<dbReference type="NCBIfam" id="NF003549">
    <property type="entry name" value="PRK05205.1-5"/>
    <property type="match status" value="1"/>
</dbReference>
<dbReference type="PANTHER" id="PTHR11608">
    <property type="entry name" value="BIFUNCTIONAL PROTEIN PYRR"/>
    <property type="match status" value="1"/>
</dbReference>
<dbReference type="PANTHER" id="PTHR11608:SF0">
    <property type="entry name" value="BIFUNCTIONAL PROTEIN PYRR"/>
    <property type="match status" value="1"/>
</dbReference>
<dbReference type="Pfam" id="PF00156">
    <property type="entry name" value="Pribosyltran"/>
    <property type="match status" value="1"/>
</dbReference>
<dbReference type="SUPFAM" id="SSF53271">
    <property type="entry name" value="PRTase-like"/>
    <property type="match status" value="1"/>
</dbReference>
<evidence type="ECO:0000250" key="1"/>
<evidence type="ECO:0000255" key="2">
    <source>
        <dbReference type="HAMAP-Rule" id="MF_01219"/>
    </source>
</evidence>
<name>PYRR_PASMU</name>
<protein>
    <recommendedName>
        <fullName evidence="2">Bifunctional protein PyrR</fullName>
    </recommendedName>
    <domain>
        <recommendedName>
            <fullName evidence="2">Pyrimidine operon regulatory protein</fullName>
        </recommendedName>
    </domain>
    <domain>
        <recommendedName>
            <fullName evidence="2">Uracil phosphoribosyltransferase</fullName>
            <shortName evidence="2">UPRTase</shortName>
            <ecNumber evidence="2">2.4.2.9</ecNumber>
        </recommendedName>
    </domain>
</protein>
<feature type="chain" id="PRO_0000183048" description="Bifunctional protein PyrR">
    <location>
        <begin position="1"/>
        <end position="181"/>
    </location>
</feature>
<feature type="short sequence motif" description="PRPP-binding" evidence="2">
    <location>
        <begin position="100"/>
        <end position="112"/>
    </location>
</feature>
<feature type="binding site" evidence="1">
    <location>
        <begin position="39"/>
        <end position="40"/>
    </location>
    <ligand>
        <name>substrate</name>
    </ligand>
</feature>
<feature type="binding site" evidence="1">
    <location>
        <begin position="104"/>
        <end position="112"/>
    </location>
    <ligand>
        <name>substrate</name>
    </ligand>
</feature>
<feature type="binding site" evidence="1">
    <location>
        <position position="137"/>
    </location>
    <ligand>
        <name>substrate</name>
    </ligand>
</feature>
<feature type="binding site" evidence="1">
    <location>
        <position position="161"/>
    </location>
    <ligand>
        <name>substrate</name>
    </ligand>
</feature>